<organism>
    <name type="scientific">Chlamydomonas reinhardtii</name>
    <name type="common">Chlamydomonas smithii</name>
    <dbReference type="NCBI Taxonomy" id="3055"/>
    <lineage>
        <taxon>Eukaryota</taxon>
        <taxon>Viridiplantae</taxon>
        <taxon>Chlorophyta</taxon>
        <taxon>core chlorophytes</taxon>
        <taxon>Chlorophyceae</taxon>
        <taxon>CS clade</taxon>
        <taxon>Chlamydomonadales</taxon>
        <taxon>Chlamydomonadaceae</taxon>
        <taxon>Chlamydomonas</taxon>
    </lineage>
</organism>
<reference key="1">
    <citation type="journal article" date="2007" name="Science">
        <title>The Chlamydomonas genome reveals the evolution of key animal and plant functions.</title>
        <authorList>
            <person name="Merchant S.S."/>
            <person name="Prochnik S.E."/>
            <person name="Vallon O."/>
            <person name="Harris E.H."/>
            <person name="Karpowicz S.J."/>
            <person name="Witman G.B."/>
            <person name="Terry A."/>
            <person name="Salamov A."/>
            <person name="Fritz-Laylin L.K."/>
            <person name="Marechal-Drouard L."/>
            <person name="Marshall W.F."/>
            <person name="Qu L.H."/>
            <person name="Nelson D.R."/>
            <person name="Sanderfoot A.A."/>
            <person name="Spalding M.H."/>
            <person name="Kapitonov V.V."/>
            <person name="Ren Q."/>
            <person name="Ferris P."/>
            <person name="Lindquist E."/>
            <person name="Shapiro H."/>
            <person name="Lucas S.M."/>
            <person name="Grimwood J."/>
            <person name="Schmutz J."/>
            <person name="Cardol P."/>
            <person name="Cerutti H."/>
            <person name="Chanfreau G."/>
            <person name="Chen C.L."/>
            <person name="Cognat V."/>
            <person name="Croft M.T."/>
            <person name="Dent R."/>
            <person name="Dutcher S."/>
            <person name="Fernandez E."/>
            <person name="Fukuzawa H."/>
            <person name="Gonzalez-Ballester D."/>
            <person name="Gonzalez-Halphen D."/>
            <person name="Hallmann A."/>
            <person name="Hanikenne M."/>
            <person name="Hippler M."/>
            <person name="Inwood W."/>
            <person name="Jabbari K."/>
            <person name="Kalanon M."/>
            <person name="Kuras R."/>
            <person name="Lefebvre P.A."/>
            <person name="Lemaire S.D."/>
            <person name="Lobanov A.V."/>
            <person name="Lohr M."/>
            <person name="Manuell A."/>
            <person name="Meier I."/>
            <person name="Mets L."/>
            <person name="Mittag M."/>
            <person name="Mittelmeier T."/>
            <person name="Moroney J.V."/>
            <person name="Moseley J."/>
            <person name="Napoli C."/>
            <person name="Nedelcu A.M."/>
            <person name="Niyogi K."/>
            <person name="Novoselov S.V."/>
            <person name="Paulsen I.T."/>
            <person name="Pazour G.J."/>
            <person name="Purton S."/>
            <person name="Ral J.P."/>
            <person name="Riano-Pachon D.M."/>
            <person name="Riekhof W."/>
            <person name="Rymarquis L."/>
            <person name="Schroda M."/>
            <person name="Stern D."/>
            <person name="Umen J."/>
            <person name="Willows R."/>
            <person name="Wilson N."/>
            <person name="Zimmer S.L."/>
            <person name="Allmer J."/>
            <person name="Balk J."/>
            <person name="Bisova K."/>
            <person name="Chen C.J."/>
            <person name="Elias M."/>
            <person name="Gendler K."/>
            <person name="Hauser C."/>
            <person name="Lamb M.R."/>
            <person name="Ledford H."/>
            <person name="Long J.C."/>
            <person name="Minagawa J."/>
            <person name="Page M.D."/>
            <person name="Pan J."/>
            <person name="Pootakham W."/>
            <person name="Roje S."/>
            <person name="Rose A."/>
            <person name="Stahlberg E."/>
            <person name="Terauchi A.M."/>
            <person name="Yang P."/>
            <person name="Ball S."/>
            <person name="Bowler C."/>
            <person name="Dieckmann C.L."/>
            <person name="Gladyshev V.N."/>
            <person name="Green P."/>
            <person name="Jorgensen R."/>
            <person name="Mayfield S."/>
            <person name="Mueller-Roeber B."/>
            <person name="Rajamani S."/>
            <person name="Sayre R.T."/>
            <person name="Brokstein P."/>
            <person name="Dubchak I."/>
            <person name="Goodstein D."/>
            <person name="Hornick L."/>
            <person name="Huang Y.W."/>
            <person name="Jhaveri J."/>
            <person name="Luo Y."/>
            <person name="Martinez D."/>
            <person name="Ngau W.C."/>
            <person name="Otillar B."/>
            <person name="Poliakov A."/>
            <person name="Porter A."/>
            <person name="Szajkowski L."/>
            <person name="Werner G."/>
            <person name="Zhou K."/>
            <person name="Grigoriev I.V."/>
            <person name="Rokhsar D.S."/>
            <person name="Grossman A.R."/>
        </authorList>
    </citation>
    <scope>NUCLEOTIDE SEQUENCE [LARGE SCALE GENOMIC DNA]</scope>
    <source>
        <strain>CC-503</strain>
    </source>
</reference>
<reference key="2">
    <citation type="journal article" date="2013" name="Mol. Biol. Cell">
        <title>The N-DRC forms a conserved biochemical complex that maintains outer doublet alignment and limits microtubule sliding in motile axonemes.</title>
        <authorList>
            <person name="Bower R."/>
            <person name="Tritschler D."/>
            <person name="Vanderwaal K."/>
            <person name="Perrone C.A."/>
            <person name="Mueller J."/>
            <person name="Fox L."/>
            <person name="Sale W.S."/>
            <person name="Porter M.E."/>
        </authorList>
    </citation>
    <scope>FUNCTION</scope>
    <scope>SUBUNIT</scope>
    <scope>SUBCELLULAR LOCATION</scope>
    <scope>INTERACTION WITH DRC5</scope>
    <scope>IDENTIFICATION BY MASS SPECTROMETRY</scope>
</reference>
<reference key="3">
    <citation type="journal article" date="2015" name="Mol. Biol. Cell">
        <title>Detailed structural and biochemical characterization of the nexin-dynein regulatory complex.</title>
        <authorList>
            <person name="Oda T."/>
            <person name="Yanagisawa H."/>
            <person name="Kikkawa M."/>
        </authorList>
    </citation>
    <scope>FUNCTION</scope>
    <scope>SUBUNIT</scope>
    <scope>SUBCELLULAR LOCATION</scope>
</reference>
<feature type="chain" id="PRO_0000444021" description="Dynein regulatory complex protein 11">
    <location>
        <begin position="1"/>
        <end position="555"/>
    </location>
</feature>
<feature type="domain" description="IQ 1" evidence="1">
    <location>
        <begin position="154"/>
        <end position="183"/>
    </location>
</feature>
<feature type="domain" description="IQ 2" evidence="1">
    <location>
        <begin position="199"/>
        <end position="226"/>
    </location>
</feature>
<feature type="region of interest" description="Disordered" evidence="2">
    <location>
        <begin position="232"/>
        <end position="255"/>
    </location>
</feature>
<feature type="region of interest" description="Disordered" evidence="2">
    <location>
        <begin position="299"/>
        <end position="377"/>
    </location>
</feature>
<feature type="region of interest" description="Disordered" evidence="2">
    <location>
        <begin position="450"/>
        <end position="469"/>
    </location>
</feature>
<feature type="region of interest" description="Disordered" evidence="2">
    <location>
        <begin position="501"/>
        <end position="555"/>
    </location>
</feature>
<feature type="compositionally biased region" description="Basic and acidic residues" evidence="2">
    <location>
        <begin position="235"/>
        <end position="244"/>
    </location>
</feature>
<feature type="compositionally biased region" description="Basic and acidic residues" evidence="2">
    <location>
        <begin position="338"/>
        <end position="367"/>
    </location>
</feature>
<feature type="compositionally biased region" description="Basic residues" evidence="2">
    <location>
        <begin position="452"/>
        <end position="464"/>
    </location>
</feature>
<feature type="compositionally biased region" description="Basic and acidic residues" evidence="2">
    <location>
        <begin position="501"/>
        <end position="521"/>
    </location>
</feature>
<feature type="compositionally biased region" description="Basic residues" evidence="2">
    <location>
        <begin position="537"/>
        <end position="546"/>
    </location>
</feature>
<proteinExistence type="evidence at protein level"/>
<evidence type="ECO:0000255" key="1">
    <source>
        <dbReference type="PROSITE-ProRule" id="PRU00116"/>
    </source>
</evidence>
<evidence type="ECO:0000256" key="2">
    <source>
        <dbReference type="SAM" id="MobiDB-lite"/>
    </source>
</evidence>
<evidence type="ECO:0000269" key="3">
    <source>
    </source>
</evidence>
<evidence type="ECO:0000269" key="4">
    <source>
    </source>
</evidence>
<evidence type="ECO:0000303" key="5">
    <source>
    </source>
</evidence>
<evidence type="ECO:0000303" key="6">
    <source>
    </source>
</evidence>
<evidence type="ECO:0000305" key="7"/>
<keyword id="KW-0966">Cell projection</keyword>
<keyword id="KW-0969">Cilium</keyword>
<keyword id="KW-0963">Cytoplasm</keyword>
<keyword id="KW-0206">Cytoskeleton</keyword>
<keyword id="KW-0282">Flagellum</keyword>
<gene>
    <name evidence="5 6" type="primary">DRC11</name>
    <name type="synonym">FAP82</name>
    <name type="ORF">CHLREDRAFT_169559</name>
</gene>
<accession>A8IHT2</accession>
<comment type="function">
    <text evidence="3 4">Component of the nexin-dynein regulatory complex (N-DRC), a key regulator of ciliary/flagellar motility which maintains the alignment and integrity of the distal axoneme and regulates microtubule sliding in motile axonemes (PubMed:23427265, PubMed:25411337).</text>
</comment>
<comment type="subunit">
    <text evidence="3 4">Component of the nexin-dynein regulatory complex (N-DRC) (PubMed:23427265, PubMed:25411337). Interacts with DRC5 (PubMed:23427265).</text>
</comment>
<comment type="subcellular location">
    <subcellularLocation>
        <location evidence="3 4">Cytoplasm</location>
        <location evidence="3 4">Cytoskeleton</location>
        <location evidence="3 4">Flagellum axoneme</location>
    </subcellularLocation>
</comment>
<comment type="similarity">
    <text evidence="7">Belongs to the AAA ATPase family. DRC11 subfamily.</text>
</comment>
<sequence>MWREAMMELLDQLEAENPEDPALAPKDLSEWACIYIKYLQIMRKLETAYDQMVHPQKRQDMRKALEACIGRMLEIRHWMVKLNRGLDFINLDDILVDLKLGPEVLEVPVPKYFIEDRAKELDDRDKFLEALIEKYNVKGPAASPIIRIGAPLGEDEAILMIQKNERGRQARERARLAAITKRQRQIEDRRVRLGVTLSHEEAARKIQAAIRGFLWRRRIKKEADKELMFIGMKPKPRDPKRDPQMGEAKNLMRRKRVQLEHGREYDEAIVNLKGKVRELEGQDMRETIQDKVNAWFVEKRNPDTGEYPDFPDPDDGGSRAILNPPPPSLASLLEDAAGDGKGKGKDGKGDAKKDAKKDPKKDKKGGGDEPQAEEQKIGAVFIPAIEAAVQEFVAKWQDRDEADNFHQKYDAELVKDELRPIVFEEIRLQVDGEMRVLLQNLKDLVEAERAAKLGKKGKKKKGKKKEPFSRIKKELLKEAKTLAPGERVLVLGNSREPYLCAKKDEKDAAGDGKGKGKDGKGGGKPGTAGSKPGTADKKKKGGKKKSLCSDWSCGA</sequence>
<name>DRC11_CHLRE</name>
<protein>
    <recommendedName>
        <fullName evidence="5 6">Dynein regulatory complex protein 11</fullName>
    </recommendedName>
    <alternativeName>
        <fullName>Flagellar-associated protein 82</fullName>
    </alternativeName>
</protein>
<dbReference type="EMBL" id="DS496117">
    <property type="protein sequence ID" value="EDP05924.1"/>
    <property type="molecule type" value="Genomic_DNA"/>
</dbReference>
<dbReference type="RefSeq" id="XP_001690665.1">
    <property type="nucleotide sequence ID" value="XM_001690613.1"/>
</dbReference>
<dbReference type="SMR" id="A8IHT2"/>
<dbReference type="PaxDb" id="3055-EDP05924"/>
<dbReference type="eggNOG" id="KOG0740">
    <property type="taxonomic scope" value="Eukaryota"/>
</dbReference>
<dbReference type="HOGENOM" id="CLU_005923_0_0_1"/>
<dbReference type="GO" id="GO:0005930">
    <property type="term" value="C:axoneme"/>
    <property type="evidence" value="ECO:0000314"/>
    <property type="project" value="UniProtKB"/>
</dbReference>
<dbReference type="GO" id="GO:0031514">
    <property type="term" value="C:motile cilium"/>
    <property type="evidence" value="ECO:0007669"/>
    <property type="project" value="UniProtKB-KW"/>
</dbReference>
<dbReference type="Gene3D" id="1.20.5.190">
    <property type="match status" value="1"/>
</dbReference>
<dbReference type="InterPro" id="IPR000048">
    <property type="entry name" value="IQ_motif_EF-hand-BS"/>
</dbReference>
<dbReference type="InterPro" id="IPR052267">
    <property type="entry name" value="N-DRC_Component"/>
</dbReference>
<dbReference type="PANTHER" id="PTHR14690">
    <property type="entry name" value="IQ MOTIF CONTAINING WITH AAA DOMAIN 1"/>
    <property type="match status" value="1"/>
</dbReference>
<dbReference type="PANTHER" id="PTHR14690:SF0">
    <property type="entry name" value="IQ MOTIF CONTAINING WITH AAA DOMAIN 1"/>
    <property type="match status" value="1"/>
</dbReference>
<dbReference type="Pfam" id="PF00612">
    <property type="entry name" value="IQ"/>
    <property type="match status" value="1"/>
</dbReference>
<dbReference type="SMART" id="SM00015">
    <property type="entry name" value="IQ"/>
    <property type="match status" value="2"/>
</dbReference>
<dbReference type="PROSITE" id="PS50096">
    <property type="entry name" value="IQ"/>
    <property type="match status" value="2"/>
</dbReference>